<reference key="1">
    <citation type="journal article" date="2005" name="FEBS J.">
        <title>Proteome analysis of a rat liver nuclear insoluble protein fraction and localization of a novel protein, ISP36, to compartments in the interchromatin space.</title>
        <authorList>
            <person name="Segawa M."/>
            <person name="Niino K."/>
            <person name="Mineki R."/>
            <person name="Kaga N."/>
            <person name="Murayama K."/>
            <person name="Sugimoto K."/>
            <person name="Watanabe Y."/>
            <person name="Furukawa K."/>
            <person name="Horigome T."/>
        </authorList>
    </citation>
    <scope>PROTEIN SEQUENCE</scope>
    <scope>SUBCELLULAR LOCATION</scope>
    <source>
        <tissue>Liver</tissue>
    </source>
</reference>
<keyword id="KW-0010">Activator</keyword>
<keyword id="KW-0903">Direct protein sequencing</keyword>
<keyword id="KW-0238">DNA-binding</keyword>
<keyword id="KW-0479">Metal-binding</keyword>
<keyword id="KW-0539">Nucleus</keyword>
<keyword id="KW-1185">Reference proteome</keyword>
<keyword id="KW-0677">Repeat</keyword>
<keyword id="KW-0804">Transcription</keyword>
<keyword id="KW-0805">Transcription regulation</keyword>
<keyword id="KW-0862">Zinc</keyword>
<keyword id="KW-0863">Zinc-finger</keyword>
<comment type="function">
    <text evidence="1">Probable transcriptional activator which may play a role in neuronal differentiation. Able to bind DNA and activate expression in vitro (By similarity).</text>
</comment>
<comment type="subcellular location">
    <subcellularLocation>
        <location evidence="1">Nucleus matrix</location>
    </subcellularLocation>
</comment>
<comment type="similarity">
    <text evidence="4">Belongs to the AKAP95 family.</text>
</comment>
<proteinExistence type="evidence at protein level"/>
<evidence type="ECO:0000250" key="1"/>
<evidence type="ECO:0000256" key="2">
    <source>
        <dbReference type="SAM" id="MobiDB-lite"/>
    </source>
</evidence>
<evidence type="ECO:0000303" key="3">
    <source>
    </source>
</evidence>
<evidence type="ECO:0000305" key="4"/>
<feature type="chain" id="PRO_0000075389" description="Zinc finger protein 326">
    <location>
        <begin position="1" status="less than"/>
        <end position="22" status="greater than"/>
    </location>
</feature>
<feature type="region of interest" description="Disordered" evidence="2">
    <location>
        <begin position="1"/>
        <end position="22"/>
    </location>
</feature>
<feature type="compositionally biased region" description="Polar residues" evidence="2">
    <location>
        <begin position="11"/>
        <end position="22"/>
    </location>
</feature>
<feature type="non-consecutive residues" evidence="4">
    <location>
        <begin position="12"/>
        <end position="13"/>
    </location>
</feature>
<feature type="non-terminal residue" evidence="3">
    <location>
        <position position="1"/>
    </location>
</feature>
<feature type="non-terminal residue" evidence="3">
    <location>
        <position position="22"/>
    </location>
</feature>
<name>ZN326_RAT</name>
<sequence>QGYGFNEPEQTRNQGGSSWEAP</sequence>
<protein>
    <recommendedName>
        <fullName>Zinc finger protein 326</fullName>
    </recommendedName>
</protein>
<dbReference type="InParanoid" id="P84587"/>
<dbReference type="Proteomes" id="UP000002494">
    <property type="component" value="Unplaced"/>
</dbReference>
<dbReference type="GO" id="GO:0016363">
    <property type="term" value="C:nuclear matrix"/>
    <property type="evidence" value="ECO:0007669"/>
    <property type="project" value="UniProtKB-SubCell"/>
</dbReference>
<dbReference type="GO" id="GO:0003677">
    <property type="term" value="F:DNA binding"/>
    <property type="evidence" value="ECO:0007669"/>
    <property type="project" value="UniProtKB-KW"/>
</dbReference>
<dbReference type="GO" id="GO:0008270">
    <property type="term" value="F:zinc ion binding"/>
    <property type="evidence" value="ECO:0007669"/>
    <property type="project" value="UniProtKB-KW"/>
</dbReference>
<organism>
    <name type="scientific">Rattus norvegicus</name>
    <name type="common">Rat</name>
    <dbReference type="NCBI Taxonomy" id="10116"/>
    <lineage>
        <taxon>Eukaryota</taxon>
        <taxon>Metazoa</taxon>
        <taxon>Chordata</taxon>
        <taxon>Craniata</taxon>
        <taxon>Vertebrata</taxon>
        <taxon>Euteleostomi</taxon>
        <taxon>Mammalia</taxon>
        <taxon>Eutheria</taxon>
        <taxon>Euarchontoglires</taxon>
        <taxon>Glires</taxon>
        <taxon>Rodentia</taxon>
        <taxon>Myomorpha</taxon>
        <taxon>Muroidea</taxon>
        <taxon>Muridae</taxon>
        <taxon>Murinae</taxon>
        <taxon>Rattus</taxon>
    </lineage>
</organism>
<gene>
    <name type="primary">Znf326</name>
    <name type="synonym">Zfp326</name>
</gene>
<accession>P84587</accession>